<sequence>MTHKQRAIFEPALVRTALLDAVKKLDPRVQWRNPVMFVVYLGSWLTTLIWLDILSGHTTGSAMFTGSIALWLWFTVLFANMAEALAEGRSKAQAASLRGVKKTSWAKKLSEARVDAPQEKVSADSLRKGDLVLIEAGDTVPCDGEVLEGGASVDESAITGESAPVIRESGGDFSSVTGGTRVLSDWLVVECRVNPGETFLDRMIAMVEGAKRRKTPNEVALTILLVALTIVFLLATATLYPFSVFSVEASQAGSPVTITVLVALLVCLIPTTIGGLLSAIGVAGMSRMLGANVIATSGRAVEAAGDVDVLLLDKTGTITLGNRQASEFLPAPGVTEQQLADAAQLSSLADETPEGRSIVVLAKQRFNLRERDLHSLNATFIPFSAQTRMSGVNVQERMIRKGAVDAIRRHVESNQGHFPPAVDDLVASVARTGGTPLVVAEGSRVLGVVALKDIVKGGIKERFAELRKMGIKTVMITGDNRLTAAAIAAEAGVDDFLAEATPEAKLALIRQYQAEGRLVAMTGDGTNDAPALAQADVAVAMNSGTQAAKEAGNMVDLDSNPTKLIEVVHIGKQMLMTRGSLTTFSIANDVAKYFAIIPAAFAATYPQLNALNIMQLHSPSSAILSAVIFNALVIVFLIPLALKGVSYKAMSAAALLRRNLWIYGLGGLLVPFVGIKLIDLLLTALNMG</sequence>
<protein>
    <recommendedName>
        <fullName evidence="1">Potassium-transporting ATPase ATP-binding subunit</fullName>
        <ecNumber evidence="1">7.2.2.6</ecNumber>
    </recommendedName>
    <alternativeName>
        <fullName evidence="1">ATP phosphohydrolase [potassium-transporting] B chain</fullName>
    </alternativeName>
    <alternativeName>
        <fullName evidence="1">Potassium-binding and translocating subunit B</fullName>
    </alternativeName>
    <alternativeName>
        <fullName evidence="1">Potassium-translocating ATPase B chain</fullName>
    </alternativeName>
</protein>
<gene>
    <name evidence="1" type="primary">kdpB</name>
    <name type="ordered locus">YPDSF_1581</name>
</gene>
<accession>A4TL06</accession>
<reference key="1">
    <citation type="submission" date="2007-02" db="EMBL/GenBank/DDBJ databases">
        <title>Complete sequence of chromosome of Yersinia pestis Pestoides F.</title>
        <authorList>
            <consortium name="US DOE Joint Genome Institute"/>
            <person name="Copeland A."/>
            <person name="Lucas S."/>
            <person name="Lapidus A."/>
            <person name="Barry K."/>
            <person name="Detter J.C."/>
            <person name="Glavina del Rio T."/>
            <person name="Hammon N."/>
            <person name="Israni S."/>
            <person name="Dalin E."/>
            <person name="Tice H."/>
            <person name="Pitluck S."/>
            <person name="Di Bartolo G."/>
            <person name="Chain P."/>
            <person name="Malfatti S."/>
            <person name="Shin M."/>
            <person name="Vergez L."/>
            <person name="Schmutz J."/>
            <person name="Larimer F."/>
            <person name="Land M."/>
            <person name="Hauser L."/>
            <person name="Worsham P."/>
            <person name="Chu M."/>
            <person name="Bearden S."/>
            <person name="Garcia E."/>
            <person name="Richardson P."/>
        </authorList>
    </citation>
    <scope>NUCLEOTIDE SEQUENCE [LARGE SCALE GENOMIC DNA]</scope>
    <source>
        <strain>Pestoides F</strain>
    </source>
</reference>
<organism>
    <name type="scientific">Yersinia pestis (strain Pestoides F)</name>
    <dbReference type="NCBI Taxonomy" id="386656"/>
    <lineage>
        <taxon>Bacteria</taxon>
        <taxon>Pseudomonadati</taxon>
        <taxon>Pseudomonadota</taxon>
        <taxon>Gammaproteobacteria</taxon>
        <taxon>Enterobacterales</taxon>
        <taxon>Yersiniaceae</taxon>
        <taxon>Yersinia</taxon>
    </lineage>
</organism>
<dbReference type="EC" id="7.2.2.6" evidence="1"/>
<dbReference type="EMBL" id="CP000668">
    <property type="protein sequence ID" value="ABP39968.1"/>
    <property type="molecule type" value="Genomic_DNA"/>
</dbReference>
<dbReference type="RefSeq" id="WP_002209651.1">
    <property type="nucleotide sequence ID" value="NZ_CP009715.1"/>
</dbReference>
<dbReference type="SMR" id="A4TL06"/>
<dbReference type="GeneID" id="57976002"/>
<dbReference type="KEGG" id="ypp:YPDSF_1581"/>
<dbReference type="PATRIC" id="fig|386656.14.peg.2188"/>
<dbReference type="GO" id="GO:0005886">
    <property type="term" value="C:plasma membrane"/>
    <property type="evidence" value="ECO:0007669"/>
    <property type="project" value="UniProtKB-SubCell"/>
</dbReference>
<dbReference type="GO" id="GO:0005524">
    <property type="term" value="F:ATP binding"/>
    <property type="evidence" value="ECO:0007669"/>
    <property type="project" value="UniProtKB-UniRule"/>
</dbReference>
<dbReference type="GO" id="GO:0016887">
    <property type="term" value="F:ATP hydrolysis activity"/>
    <property type="evidence" value="ECO:0007669"/>
    <property type="project" value="InterPro"/>
</dbReference>
<dbReference type="GO" id="GO:0000287">
    <property type="term" value="F:magnesium ion binding"/>
    <property type="evidence" value="ECO:0007669"/>
    <property type="project" value="UniProtKB-UniRule"/>
</dbReference>
<dbReference type="GO" id="GO:0008556">
    <property type="term" value="F:P-type potassium transmembrane transporter activity"/>
    <property type="evidence" value="ECO:0007669"/>
    <property type="project" value="UniProtKB-UniRule"/>
</dbReference>
<dbReference type="CDD" id="cd02078">
    <property type="entry name" value="P-type_ATPase_K"/>
    <property type="match status" value="1"/>
</dbReference>
<dbReference type="FunFam" id="2.70.150.10:FF:000010">
    <property type="entry name" value="Potassium-transporting ATPase ATP-binding subunit"/>
    <property type="match status" value="1"/>
</dbReference>
<dbReference type="FunFam" id="3.40.1110.10:FF:000007">
    <property type="entry name" value="Potassium-transporting ATPase ATP-binding subunit"/>
    <property type="match status" value="1"/>
</dbReference>
<dbReference type="Gene3D" id="3.40.1110.10">
    <property type="entry name" value="Calcium-transporting ATPase, cytoplasmic domain N"/>
    <property type="match status" value="1"/>
</dbReference>
<dbReference type="Gene3D" id="2.70.150.10">
    <property type="entry name" value="Calcium-transporting ATPase, cytoplasmic transduction domain A"/>
    <property type="match status" value="1"/>
</dbReference>
<dbReference type="Gene3D" id="3.40.50.1000">
    <property type="entry name" value="HAD superfamily/HAD-like"/>
    <property type="match status" value="1"/>
</dbReference>
<dbReference type="HAMAP" id="MF_00285">
    <property type="entry name" value="KdpB"/>
    <property type="match status" value="1"/>
</dbReference>
<dbReference type="InterPro" id="IPR023299">
    <property type="entry name" value="ATPase_P-typ_cyto_dom_N"/>
</dbReference>
<dbReference type="InterPro" id="IPR018303">
    <property type="entry name" value="ATPase_P-typ_P_site"/>
</dbReference>
<dbReference type="InterPro" id="IPR023298">
    <property type="entry name" value="ATPase_P-typ_TM_dom_sf"/>
</dbReference>
<dbReference type="InterPro" id="IPR008250">
    <property type="entry name" value="ATPase_P-typ_transduc_dom_A_sf"/>
</dbReference>
<dbReference type="InterPro" id="IPR036412">
    <property type="entry name" value="HAD-like_sf"/>
</dbReference>
<dbReference type="InterPro" id="IPR023214">
    <property type="entry name" value="HAD_sf"/>
</dbReference>
<dbReference type="InterPro" id="IPR006391">
    <property type="entry name" value="P-type_ATPase_bsu_IA"/>
</dbReference>
<dbReference type="InterPro" id="IPR001757">
    <property type="entry name" value="P_typ_ATPase"/>
</dbReference>
<dbReference type="InterPro" id="IPR044492">
    <property type="entry name" value="P_typ_ATPase_HD_dom"/>
</dbReference>
<dbReference type="NCBIfam" id="TIGR01494">
    <property type="entry name" value="ATPase_P-type"/>
    <property type="match status" value="2"/>
</dbReference>
<dbReference type="NCBIfam" id="TIGR01497">
    <property type="entry name" value="kdpB"/>
    <property type="match status" value="1"/>
</dbReference>
<dbReference type="PANTHER" id="PTHR43743">
    <property type="entry name" value="POTASSIUM-TRANSPORTING ATPASE ATP-BINDING SUBUNIT"/>
    <property type="match status" value="1"/>
</dbReference>
<dbReference type="PANTHER" id="PTHR43743:SF1">
    <property type="entry name" value="POTASSIUM-TRANSPORTING ATPASE ATP-BINDING SUBUNIT"/>
    <property type="match status" value="1"/>
</dbReference>
<dbReference type="Pfam" id="PF00122">
    <property type="entry name" value="E1-E2_ATPase"/>
    <property type="match status" value="1"/>
</dbReference>
<dbReference type="Pfam" id="PF00702">
    <property type="entry name" value="Hydrolase"/>
    <property type="match status" value="1"/>
</dbReference>
<dbReference type="PRINTS" id="PR00119">
    <property type="entry name" value="CATATPASE"/>
</dbReference>
<dbReference type="SFLD" id="SFLDG00002">
    <property type="entry name" value="C1.7:_P-type_atpase_like"/>
    <property type="match status" value="1"/>
</dbReference>
<dbReference type="SFLD" id="SFLDF00027">
    <property type="entry name" value="p-type_atpase"/>
    <property type="match status" value="1"/>
</dbReference>
<dbReference type="SUPFAM" id="SSF81653">
    <property type="entry name" value="Calcium ATPase, transduction domain A"/>
    <property type="match status" value="1"/>
</dbReference>
<dbReference type="SUPFAM" id="SSF81665">
    <property type="entry name" value="Calcium ATPase, transmembrane domain M"/>
    <property type="match status" value="1"/>
</dbReference>
<dbReference type="SUPFAM" id="SSF56784">
    <property type="entry name" value="HAD-like"/>
    <property type="match status" value="1"/>
</dbReference>
<dbReference type="SUPFAM" id="SSF81660">
    <property type="entry name" value="Metal cation-transporting ATPase, ATP-binding domain N"/>
    <property type="match status" value="1"/>
</dbReference>
<dbReference type="PROSITE" id="PS00154">
    <property type="entry name" value="ATPASE_E1_E2"/>
    <property type="match status" value="1"/>
</dbReference>
<name>KDPB_YERPP</name>
<feature type="chain" id="PRO_1000022452" description="Potassium-transporting ATPase ATP-binding subunit">
    <location>
        <begin position="1"/>
        <end position="688"/>
    </location>
</feature>
<feature type="transmembrane region" description="Helical" evidence="1">
    <location>
        <begin position="34"/>
        <end position="54"/>
    </location>
</feature>
<feature type="transmembrane region" description="Helical" evidence="1">
    <location>
        <begin position="62"/>
        <end position="82"/>
    </location>
</feature>
<feature type="transmembrane region" description="Helical" evidence="1">
    <location>
        <begin position="219"/>
        <end position="239"/>
    </location>
</feature>
<feature type="transmembrane region" description="Helical" evidence="1">
    <location>
        <begin position="260"/>
        <end position="280"/>
    </location>
</feature>
<feature type="transmembrane region" description="Helical" evidence="1">
    <location>
        <begin position="594"/>
        <end position="614"/>
    </location>
</feature>
<feature type="transmembrane region" description="Helical" evidence="1">
    <location>
        <begin position="622"/>
        <end position="642"/>
    </location>
</feature>
<feature type="transmembrane region" description="Helical" evidence="1">
    <location>
        <begin position="662"/>
        <end position="682"/>
    </location>
</feature>
<feature type="active site" description="4-aspartylphosphate intermediate" evidence="1">
    <location>
        <position position="313"/>
    </location>
</feature>
<feature type="binding site" evidence="1">
    <location>
        <position position="350"/>
    </location>
    <ligand>
        <name>ATP</name>
        <dbReference type="ChEBI" id="CHEBI:30616"/>
    </ligand>
</feature>
<feature type="binding site" evidence="1">
    <location>
        <position position="354"/>
    </location>
    <ligand>
        <name>ATP</name>
        <dbReference type="ChEBI" id="CHEBI:30616"/>
    </ligand>
</feature>
<feature type="binding site" evidence="1">
    <location>
        <begin position="383"/>
        <end position="390"/>
    </location>
    <ligand>
        <name>ATP</name>
        <dbReference type="ChEBI" id="CHEBI:30616"/>
    </ligand>
</feature>
<feature type="binding site" evidence="1">
    <location>
        <position position="401"/>
    </location>
    <ligand>
        <name>ATP</name>
        <dbReference type="ChEBI" id="CHEBI:30616"/>
    </ligand>
</feature>
<feature type="binding site" evidence="1">
    <location>
        <position position="524"/>
    </location>
    <ligand>
        <name>Mg(2+)</name>
        <dbReference type="ChEBI" id="CHEBI:18420"/>
    </ligand>
</feature>
<feature type="binding site" evidence="1">
    <location>
        <position position="528"/>
    </location>
    <ligand>
        <name>Mg(2+)</name>
        <dbReference type="ChEBI" id="CHEBI:18420"/>
    </ligand>
</feature>
<comment type="function">
    <text evidence="1">Part of the high-affinity ATP-driven potassium transport (or Kdp) system, which catalyzes the hydrolysis of ATP coupled with the electrogenic transport of potassium into the cytoplasm. This subunit is responsible for energy coupling to the transport system and for the release of the potassium ions to the cytoplasm.</text>
</comment>
<comment type="catalytic activity">
    <reaction evidence="1">
        <text>K(+)(out) + ATP + H2O = K(+)(in) + ADP + phosphate + H(+)</text>
        <dbReference type="Rhea" id="RHEA:16777"/>
        <dbReference type="ChEBI" id="CHEBI:15377"/>
        <dbReference type="ChEBI" id="CHEBI:15378"/>
        <dbReference type="ChEBI" id="CHEBI:29103"/>
        <dbReference type="ChEBI" id="CHEBI:30616"/>
        <dbReference type="ChEBI" id="CHEBI:43474"/>
        <dbReference type="ChEBI" id="CHEBI:456216"/>
        <dbReference type="EC" id="7.2.2.6"/>
    </reaction>
    <physiologicalReaction direction="left-to-right" evidence="1">
        <dbReference type="Rhea" id="RHEA:16778"/>
    </physiologicalReaction>
</comment>
<comment type="subunit">
    <text evidence="1">The system is composed of three essential subunits: KdpA, KdpB and KdpC.</text>
</comment>
<comment type="subcellular location">
    <subcellularLocation>
        <location evidence="1">Cell inner membrane</location>
        <topology evidence="1">Multi-pass membrane protein</topology>
    </subcellularLocation>
</comment>
<comment type="similarity">
    <text evidence="1">Belongs to the cation transport ATPase (P-type) (TC 3.A.3) family. Type IA subfamily.</text>
</comment>
<keyword id="KW-0067">ATP-binding</keyword>
<keyword id="KW-0997">Cell inner membrane</keyword>
<keyword id="KW-1003">Cell membrane</keyword>
<keyword id="KW-0406">Ion transport</keyword>
<keyword id="KW-0460">Magnesium</keyword>
<keyword id="KW-0472">Membrane</keyword>
<keyword id="KW-0479">Metal-binding</keyword>
<keyword id="KW-0547">Nucleotide-binding</keyword>
<keyword id="KW-0597">Phosphoprotein</keyword>
<keyword id="KW-0630">Potassium</keyword>
<keyword id="KW-0633">Potassium transport</keyword>
<keyword id="KW-1278">Translocase</keyword>
<keyword id="KW-0812">Transmembrane</keyword>
<keyword id="KW-1133">Transmembrane helix</keyword>
<keyword id="KW-0813">Transport</keyword>
<proteinExistence type="inferred from homology"/>
<evidence type="ECO:0000255" key="1">
    <source>
        <dbReference type="HAMAP-Rule" id="MF_00285"/>
    </source>
</evidence>